<geneLocation type="chloroplast"/>
<proteinExistence type="inferred from homology"/>
<evidence type="ECO:0000255" key="1">
    <source>
        <dbReference type="HAMAP-Rule" id="MF_00458"/>
    </source>
</evidence>
<keyword id="KW-0004">4Fe-4S</keyword>
<keyword id="KW-0148">Chlorophyll</keyword>
<keyword id="KW-0150">Chloroplast</keyword>
<keyword id="KW-0157">Chromophore</keyword>
<keyword id="KW-0249">Electron transport</keyword>
<keyword id="KW-0408">Iron</keyword>
<keyword id="KW-0411">Iron-sulfur</keyword>
<keyword id="KW-0460">Magnesium</keyword>
<keyword id="KW-0472">Membrane</keyword>
<keyword id="KW-0479">Metal-binding</keyword>
<keyword id="KW-0560">Oxidoreductase</keyword>
<keyword id="KW-0602">Photosynthesis</keyword>
<keyword id="KW-0603">Photosystem I</keyword>
<keyword id="KW-0934">Plastid</keyword>
<keyword id="KW-0793">Thylakoid</keyword>
<keyword id="KW-0812">Transmembrane</keyword>
<keyword id="KW-1133">Transmembrane helix</keyword>
<keyword id="KW-0813">Transport</keyword>
<feature type="chain" id="PRO_0000088550" description="Photosystem I P700 chlorophyll a apoprotein A1">
    <location>
        <begin position="1" status="less than"/>
        <end position="721" status="greater than"/>
    </location>
</feature>
<feature type="transmembrane region" description="Helical; Name=I" evidence="1">
    <location>
        <begin position="61"/>
        <end position="84"/>
    </location>
</feature>
<feature type="transmembrane region" description="Helical; Name=II" evidence="1">
    <location>
        <begin position="147"/>
        <end position="170"/>
    </location>
</feature>
<feature type="transmembrane region" description="Helical; Name=III" evidence="1">
    <location>
        <begin position="186"/>
        <end position="210"/>
    </location>
</feature>
<feature type="transmembrane region" description="Helical; Name=IV" evidence="1">
    <location>
        <begin position="282"/>
        <end position="300"/>
    </location>
</feature>
<feature type="transmembrane region" description="Helical; Name=V" evidence="1">
    <location>
        <begin position="337"/>
        <end position="360"/>
    </location>
</feature>
<feature type="transmembrane region" description="Helical; Name=VI" evidence="1">
    <location>
        <begin position="376"/>
        <end position="402"/>
    </location>
</feature>
<feature type="transmembrane region" description="Helical; Name=VII" evidence="1">
    <location>
        <begin position="424"/>
        <end position="446"/>
    </location>
</feature>
<feature type="transmembrane region" description="Helical; Name=VIII" evidence="1">
    <location>
        <begin position="522"/>
        <end position="540"/>
    </location>
</feature>
<feature type="transmembrane region" description="Helical; Name=IX" evidence="1">
    <location>
        <begin position="580"/>
        <end position="601"/>
    </location>
</feature>
<feature type="transmembrane region" description="Helical; Name=X" evidence="1">
    <location>
        <begin position="655"/>
        <end position="677"/>
    </location>
</feature>
<feature type="transmembrane region" description="Helical; Name=XI" evidence="1">
    <location>
        <begin position="715"/>
        <end position="721" status="greater than"/>
    </location>
</feature>
<feature type="binding site" evidence="1">
    <location>
        <position position="564"/>
    </location>
    <ligand>
        <name>[4Fe-4S] cluster</name>
        <dbReference type="ChEBI" id="CHEBI:49883"/>
        <note>ligand shared between dimeric partners</note>
    </ligand>
</feature>
<feature type="binding site" evidence="1">
    <location>
        <position position="573"/>
    </location>
    <ligand>
        <name>[4Fe-4S] cluster</name>
        <dbReference type="ChEBI" id="CHEBI:49883"/>
        <note>ligand shared between dimeric partners</note>
    </ligand>
</feature>
<feature type="binding site" description="axial binding residue" evidence="1">
    <location>
        <position position="666"/>
    </location>
    <ligand>
        <name>chlorophyll a'</name>
        <dbReference type="ChEBI" id="CHEBI:189419"/>
        <label>A1</label>
    </ligand>
    <ligandPart>
        <name>Mg</name>
        <dbReference type="ChEBI" id="CHEBI:25107"/>
    </ligandPart>
</feature>
<feature type="binding site" description="axial binding residue" evidence="1">
    <location>
        <position position="674"/>
    </location>
    <ligand>
        <name>chlorophyll a</name>
        <dbReference type="ChEBI" id="CHEBI:58416"/>
        <label>A3</label>
    </ligand>
    <ligandPart>
        <name>Mg</name>
        <dbReference type="ChEBI" id="CHEBI:25107"/>
    </ligandPart>
</feature>
<feature type="binding site" evidence="1">
    <location>
        <position position="682"/>
    </location>
    <ligand>
        <name>chlorophyll a</name>
        <dbReference type="ChEBI" id="CHEBI:58416"/>
        <label>A3</label>
    </ligand>
</feature>
<feature type="binding site" evidence="1">
    <location>
        <position position="683"/>
    </location>
    <ligand>
        <name>phylloquinone</name>
        <dbReference type="ChEBI" id="CHEBI:18067"/>
        <label>A</label>
    </ligand>
</feature>
<feature type="non-terminal residue">
    <location>
        <position position="1"/>
    </location>
</feature>
<feature type="non-terminal residue">
    <location>
        <position position="721"/>
    </location>
</feature>
<name>PSAA_GINBI</name>
<gene>
    <name evidence="1" type="primary">psaA</name>
</gene>
<dbReference type="EC" id="1.97.1.12" evidence="1"/>
<dbReference type="EMBL" id="AF223226">
    <property type="protein sequence ID" value="AAF65218.1"/>
    <property type="molecule type" value="Genomic_DNA"/>
</dbReference>
<dbReference type="SMR" id="Q9MUC0"/>
<dbReference type="GO" id="GO:0009535">
    <property type="term" value="C:chloroplast thylakoid membrane"/>
    <property type="evidence" value="ECO:0007669"/>
    <property type="project" value="UniProtKB-SubCell"/>
</dbReference>
<dbReference type="GO" id="GO:0009522">
    <property type="term" value="C:photosystem I"/>
    <property type="evidence" value="ECO:0007669"/>
    <property type="project" value="UniProtKB-KW"/>
</dbReference>
<dbReference type="GO" id="GO:0051539">
    <property type="term" value="F:4 iron, 4 sulfur cluster binding"/>
    <property type="evidence" value="ECO:0007669"/>
    <property type="project" value="UniProtKB-KW"/>
</dbReference>
<dbReference type="GO" id="GO:0016168">
    <property type="term" value="F:chlorophyll binding"/>
    <property type="evidence" value="ECO:0007669"/>
    <property type="project" value="UniProtKB-KW"/>
</dbReference>
<dbReference type="GO" id="GO:0046872">
    <property type="term" value="F:metal ion binding"/>
    <property type="evidence" value="ECO:0007669"/>
    <property type="project" value="UniProtKB-KW"/>
</dbReference>
<dbReference type="GO" id="GO:0016491">
    <property type="term" value="F:oxidoreductase activity"/>
    <property type="evidence" value="ECO:0007669"/>
    <property type="project" value="UniProtKB-KW"/>
</dbReference>
<dbReference type="GO" id="GO:0015979">
    <property type="term" value="P:photosynthesis"/>
    <property type="evidence" value="ECO:0007669"/>
    <property type="project" value="UniProtKB-KW"/>
</dbReference>
<dbReference type="FunFam" id="1.20.1130.10:FF:000001">
    <property type="entry name" value="Photosystem I P700 chlorophyll a apoprotein A2"/>
    <property type="match status" value="1"/>
</dbReference>
<dbReference type="Gene3D" id="1.20.1130.10">
    <property type="entry name" value="Photosystem I PsaA/PsaB"/>
    <property type="match status" value="1"/>
</dbReference>
<dbReference type="HAMAP" id="MF_00458">
    <property type="entry name" value="PSI_PsaA"/>
    <property type="match status" value="1"/>
</dbReference>
<dbReference type="InterPro" id="IPR006243">
    <property type="entry name" value="PSI_PsaA"/>
</dbReference>
<dbReference type="InterPro" id="IPR001280">
    <property type="entry name" value="PSI_PsaA/B"/>
</dbReference>
<dbReference type="InterPro" id="IPR020586">
    <property type="entry name" value="PSI_PsaA/B_CS"/>
</dbReference>
<dbReference type="InterPro" id="IPR036408">
    <property type="entry name" value="PSI_PsaA/B_sf"/>
</dbReference>
<dbReference type="NCBIfam" id="TIGR01335">
    <property type="entry name" value="psaA"/>
    <property type="match status" value="1"/>
</dbReference>
<dbReference type="PANTHER" id="PTHR30128">
    <property type="entry name" value="OUTER MEMBRANE PROTEIN, OMPA-RELATED"/>
    <property type="match status" value="1"/>
</dbReference>
<dbReference type="PANTHER" id="PTHR30128:SF19">
    <property type="entry name" value="PHOTOSYSTEM I P700 CHLOROPHYLL A APOPROTEIN A1-RELATED"/>
    <property type="match status" value="1"/>
</dbReference>
<dbReference type="Pfam" id="PF00223">
    <property type="entry name" value="PsaA_PsaB"/>
    <property type="match status" value="1"/>
</dbReference>
<dbReference type="PIRSF" id="PIRSF002905">
    <property type="entry name" value="PSI_A"/>
    <property type="match status" value="1"/>
</dbReference>
<dbReference type="PRINTS" id="PR00257">
    <property type="entry name" value="PHOTSYSPSAAB"/>
</dbReference>
<dbReference type="SUPFAM" id="SSF81558">
    <property type="entry name" value="Photosystem I subunits PsaA/PsaB"/>
    <property type="match status" value="1"/>
</dbReference>
<dbReference type="PROSITE" id="PS00419">
    <property type="entry name" value="PHOTOSYSTEM_I_PSAAB"/>
    <property type="match status" value="1"/>
</dbReference>
<protein>
    <recommendedName>
        <fullName evidence="1">Photosystem I P700 chlorophyll a apoprotein A1</fullName>
        <ecNumber evidence="1">1.97.1.12</ecNumber>
    </recommendedName>
    <alternativeName>
        <fullName evidence="1">PSI-A</fullName>
    </alternativeName>
    <alternativeName>
        <fullName evidence="1">PsaA</fullName>
    </alternativeName>
</protein>
<sequence length="721" mass="80064">VKIVVERDPIKTSFEKWAKPGHFSRTLAKGPNTTTWIWNLHADAHDFDSHTNDLEEISRKVFSAHFGQLAIILIWLSGMYFHGARFSNYEAWLSDPTRIKPSAQVVWPIVGQEILNGDVGGGFRGIQITSGFFQIWRASGITSELQLYCTAIGALIFAALMLFAGWFHYHKAAPKLAWFQDVESMLNHHLAGLLGLGSLSWAGHQVHVSLPINQLLDAGVDPKEIPLPHEFISNRDLVAQLYPSFAKGLTPFFALNWSEYSEFLTFRGGLNPVTGGLWLTDTAHHHLAIAILFLIAGHMYRTNWGIGHSLKEILEAHKGPFTGEGHKGIYEILTTSWHAQLALNLAMLGSLTIVVAHHMYSMPPYPYLAIDYGTQLSLFTHHMWIRGFLIVGAAAHAAIFMVRDYDPTIQYNNLLDRVLRHRDAIVSHLNWACIFLGFHSFGLYIHNDTMSALGRPQDMFSDTAIQLQPIFAQWIQNTHASAPSSTAPGAAASTSLTWGGGDLLAVGGKVALLPIPLGTADFLVHHIHAFTIHVTVLILLKGVLFARSSRLIPDKANLGFRFPCDGPGRGGTCQVSAWDHVFLGLFWMYNAISVVIFHFSWKMQSDVWGSISDRGVVTHITGGNFAQSSITINGWLRDFLWAQASQVIQSYGSSLSAYGLFFLGAHFVWAFSLMFLFSGRGYWQELIESIVWAHNKLKVAPAIQPRALSIVQGRAVGVAHY</sequence>
<organism>
    <name type="scientific">Ginkgo biloba</name>
    <name type="common">Ginkgo</name>
    <name type="synonym">Maidenhair tree</name>
    <dbReference type="NCBI Taxonomy" id="3311"/>
    <lineage>
        <taxon>Eukaryota</taxon>
        <taxon>Viridiplantae</taxon>
        <taxon>Streptophyta</taxon>
        <taxon>Embryophyta</taxon>
        <taxon>Tracheophyta</taxon>
        <taxon>Spermatophyta</taxon>
        <taxon>Ginkgoidae</taxon>
        <taxon>Ginkgoales</taxon>
        <taxon>Ginkgoaceae</taxon>
        <taxon>Ginkgo</taxon>
    </lineage>
</organism>
<accession>Q9MUC0</accession>
<reference key="1">
    <citation type="journal article" date="2000" name="Mol. Biol. Evol.">
        <title>Error, bias, and long-branch attraction in data for two chloroplast photosystem genes in seed plants.</title>
        <authorList>
            <person name="Sanderson M.J."/>
            <person name="Wojciechowski M.F."/>
            <person name="Hu J.-M."/>
            <person name="Sher Khan T."/>
            <person name="Brady S.G."/>
        </authorList>
    </citation>
    <scope>NUCLEOTIDE SEQUENCE [GENOMIC DNA]</scope>
</reference>
<comment type="function">
    <text>PsaA and PsaB bind P700, the primary electron donor of photosystem I (PSI), as well as the electron acceptors A0, A1 and FX. PSI is a plastocyanin-ferredoxin oxidoreductase, converting photonic excitation into a charge separation, which transfers an electron from the donor P700 chlorophyll pair to the spectroscopically characterized acceptors A0, A1, FX, FA and FB in turn. Oxidized P700 is reduced on the lumenal side of the thylakoid membrane by plastocyanin.</text>
</comment>
<comment type="catalytic activity">
    <reaction evidence="1">
        <text>reduced [plastocyanin] + hnu + oxidized [2Fe-2S]-[ferredoxin] = oxidized [plastocyanin] + reduced [2Fe-2S]-[ferredoxin]</text>
        <dbReference type="Rhea" id="RHEA:30407"/>
        <dbReference type="Rhea" id="RHEA-COMP:10000"/>
        <dbReference type="Rhea" id="RHEA-COMP:10001"/>
        <dbReference type="Rhea" id="RHEA-COMP:10039"/>
        <dbReference type="Rhea" id="RHEA-COMP:10040"/>
        <dbReference type="ChEBI" id="CHEBI:29036"/>
        <dbReference type="ChEBI" id="CHEBI:30212"/>
        <dbReference type="ChEBI" id="CHEBI:33737"/>
        <dbReference type="ChEBI" id="CHEBI:33738"/>
        <dbReference type="ChEBI" id="CHEBI:49552"/>
        <dbReference type="EC" id="1.97.1.12"/>
    </reaction>
</comment>
<comment type="cofactor">
    <text evidence="1">P700 is a chlorophyll a/chlorophyll a' dimer, A0 is one or more chlorophyll a, A1 is one or both phylloquinones and FX is a shared 4Fe-4S iron-sulfur center.</text>
</comment>
<comment type="subunit">
    <text evidence="1">The PsaA/B heterodimer binds the P700 chlorophyll special pair and subsequent electron acceptors. PSI consists of a core antenna complex that captures photons, and an electron transfer chain that converts photonic excitation into a charge separation. The eukaryotic PSI reaction center is composed of at least 11 subunits.</text>
</comment>
<comment type="subcellular location">
    <subcellularLocation>
        <location evidence="1">Plastid</location>
        <location evidence="1">Chloroplast thylakoid membrane</location>
        <topology evidence="1">Multi-pass membrane protein</topology>
    </subcellularLocation>
</comment>
<comment type="similarity">
    <text evidence="1">Belongs to the PsaA/PsaB family.</text>
</comment>